<sequence>MNLHEYQAKQLFARYGMPAPTGYACTTPREAEEAASKIGAGPWVVKCQVHAGGRGKAGGVKLVNSKEDIRAFAEQWLGKKLVTYQTDANGQPVHQILVEAATDIDKELYLGAVIDRSSRRVVFMASTEGGVEIEKVAEETPELIHKIALDPLTGPQPYQGRELAFKLGLTGKQVGQFTKIFMGLATLFLERDLAMVEINPLVVTKQGDLICLDGKLGADGNALFRQPELREMRDPSQEDAREAHAAQWELNYVALDGNIGCMVNGAGLAMGTMDIVKLHGGEPANFLDVGGGATKERVTEAFKIILSDDKVKAVFVNIFGGIVRCDLIADGIIGAVEEVGVNVPVVVRLEGNNAELGAKKLADSGLNIIAATSLTDAAQQVVAAVGAK</sequence>
<feature type="chain" id="PRO_1000129242" description="Succinate--CoA ligase [ADP-forming] subunit beta">
    <location>
        <begin position="1"/>
        <end position="388"/>
    </location>
</feature>
<feature type="domain" description="ATP-grasp" evidence="1">
    <location>
        <begin position="9"/>
        <end position="244"/>
    </location>
</feature>
<feature type="binding site" evidence="1">
    <location>
        <position position="46"/>
    </location>
    <ligand>
        <name>ATP</name>
        <dbReference type="ChEBI" id="CHEBI:30616"/>
    </ligand>
</feature>
<feature type="binding site" evidence="1">
    <location>
        <begin position="53"/>
        <end position="55"/>
    </location>
    <ligand>
        <name>ATP</name>
        <dbReference type="ChEBI" id="CHEBI:30616"/>
    </ligand>
</feature>
<feature type="binding site" evidence="1">
    <location>
        <position position="99"/>
    </location>
    <ligand>
        <name>ATP</name>
        <dbReference type="ChEBI" id="CHEBI:30616"/>
    </ligand>
</feature>
<feature type="binding site" evidence="1">
    <location>
        <position position="102"/>
    </location>
    <ligand>
        <name>ATP</name>
        <dbReference type="ChEBI" id="CHEBI:30616"/>
    </ligand>
</feature>
<feature type="binding site" evidence="1">
    <location>
        <position position="107"/>
    </location>
    <ligand>
        <name>ATP</name>
        <dbReference type="ChEBI" id="CHEBI:30616"/>
    </ligand>
</feature>
<feature type="binding site" evidence="1">
    <location>
        <position position="199"/>
    </location>
    <ligand>
        <name>Mg(2+)</name>
        <dbReference type="ChEBI" id="CHEBI:18420"/>
    </ligand>
</feature>
<feature type="binding site" evidence="1">
    <location>
        <position position="213"/>
    </location>
    <ligand>
        <name>Mg(2+)</name>
        <dbReference type="ChEBI" id="CHEBI:18420"/>
    </ligand>
</feature>
<feature type="binding site" evidence="1">
    <location>
        <position position="264"/>
    </location>
    <ligand>
        <name>substrate</name>
        <note>ligand shared with subunit alpha</note>
    </ligand>
</feature>
<feature type="binding site" evidence="1">
    <location>
        <begin position="321"/>
        <end position="323"/>
    </location>
    <ligand>
        <name>substrate</name>
        <note>ligand shared with subunit alpha</note>
    </ligand>
</feature>
<accession>B2K8F1</accession>
<proteinExistence type="inferred from homology"/>
<reference key="1">
    <citation type="submission" date="2008-04" db="EMBL/GenBank/DDBJ databases">
        <title>Complete sequence of Yersinia pseudotuberculosis PB1/+.</title>
        <authorList>
            <person name="Copeland A."/>
            <person name="Lucas S."/>
            <person name="Lapidus A."/>
            <person name="Glavina del Rio T."/>
            <person name="Dalin E."/>
            <person name="Tice H."/>
            <person name="Bruce D."/>
            <person name="Goodwin L."/>
            <person name="Pitluck S."/>
            <person name="Munk A.C."/>
            <person name="Brettin T."/>
            <person name="Detter J.C."/>
            <person name="Han C."/>
            <person name="Tapia R."/>
            <person name="Schmutz J."/>
            <person name="Larimer F."/>
            <person name="Land M."/>
            <person name="Hauser L."/>
            <person name="Challacombe J.F."/>
            <person name="Green L."/>
            <person name="Lindler L.E."/>
            <person name="Nikolich M.P."/>
            <person name="Richardson P."/>
        </authorList>
    </citation>
    <scope>NUCLEOTIDE SEQUENCE [LARGE SCALE GENOMIC DNA]</scope>
    <source>
        <strain>PB1/+</strain>
    </source>
</reference>
<comment type="function">
    <text evidence="1">Succinyl-CoA synthetase functions in the citric acid cycle (TCA), coupling the hydrolysis of succinyl-CoA to the synthesis of either ATP or GTP and thus represents the only step of substrate-level phosphorylation in the TCA. The beta subunit provides nucleotide specificity of the enzyme and binds the substrate succinate, while the binding sites for coenzyme A and phosphate are found in the alpha subunit.</text>
</comment>
<comment type="catalytic activity">
    <reaction evidence="1">
        <text>succinate + ATP + CoA = succinyl-CoA + ADP + phosphate</text>
        <dbReference type="Rhea" id="RHEA:17661"/>
        <dbReference type="ChEBI" id="CHEBI:30031"/>
        <dbReference type="ChEBI" id="CHEBI:30616"/>
        <dbReference type="ChEBI" id="CHEBI:43474"/>
        <dbReference type="ChEBI" id="CHEBI:57287"/>
        <dbReference type="ChEBI" id="CHEBI:57292"/>
        <dbReference type="ChEBI" id="CHEBI:456216"/>
        <dbReference type="EC" id="6.2.1.5"/>
    </reaction>
    <physiologicalReaction direction="right-to-left" evidence="1">
        <dbReference type="Rhea" id="RHEA:17663"/>
    </physiologicalReaction>
</comment>
<comment type="catalytic activity">
    <reaction evidence="1">
        <text>GTP + succinate + CoA = succinyl-CoA + GDP + phosphate</text>
        <dbReference type="Rhea" id="RHEA:22120"/>
        <dbReference type="ChEBI" id="CHEBI:30031"/>
        <dbReference type="ChEBI" id="CHEBI:37565"/>
        <dbReference type="ChEBI" id="CHEBI:43474"/>
        <dbReference type="ChEBI" id="CHEBI:57287"/>
        <dbReference type="ChEBI" id="CHEBI:57292"/>
        <dbReference type="ChEBI" id="CHEBI:58189"/>
    </reaction>
    <physiologicalReaction direction="right-to-left" evidence="1">
        <dbReference type="Rhea" id="RHEA:22122"/>
    </physiologicalReaction>
</comment>
<comment type="cofactor">
    <cofactor evidence="1">
        <name>Mg(2+)</name>
        <dbReference type="ChEBI" id="CHEBI:18420"/>
    </cofactor>
    <text evidence="1">Binds 1 Mg(2+) ion per subunit.</text>
</comment>
<comment type="pathway">
    <text evidence="1">Carbohydrate metabolism; tricarboxylic acid cycle; succinate from succinyl-CoA (ligase route): step 1/1.</text>
</comment>
<comment type="subunit">
    <text evidence="1">Heterotetramer of two alpha and two beta subunits.</text>
</comment>
<comment type="similarity">
    <text evidence="1">Belongs to the succinate/malate CoA ligase beta subunit family.</text>
</comment>
<gene>
    <name evidence="1" type="primary">sucC</name>
    <name type="ordered locus">YPTS_1226</name>
</gene>
<organism>
    <name type="scientific">Yersinia pseudotuberculosis serotype IB (strain PB1/+)</name>
    <dbReference type="NCBI Taxonomy" id="502801"/>
    <lineage>
        <taxon>Bacteria</taxon>
        <taxon>Pseudomonadati</taxon>
        <taxon>Pseudomonadota</taxon>
        <taxon>Gammaproteobacteria</taxon>
        <taxon>Enterobacterales</taxon>
        <taxon>Yersiniaceae</taxon>
        <taxon>Yersinia</taxon>
    </lineage>
</organism>
<protein>
    <recommendedName>
        <fullName evidence="1">Succinate--CoA ligase [ADP-forming] subunit beta</fullName>
        <ecNumber evidence="1">6.2.1.5</ecNumber>
    </recommendedName>
    <alternativeName>
        <fullName evidence="1">Succinyl-CoA synthetase subunit beta</fullName>
        <shortName evidence="1">SCS-beta</shortName>
    </alternativeName>
</protein>
<evidence type="ECO:0000255" key="1">
    <source>
        <dbReference type="HAMAP-Rule" id="MF_00558"/>
    </source>
</evidence>
<name>SUCC_YERPB</name>
<keyword id="KW-0067">ATP-binding</keyword>
<keyword id="KW-0436">Ligase</keyword>
<keyword id="KW-0460">Magnesium</keyword>
<keyword id="KW-0479">Metal-binding</keyword>
<keyword id="KW-0547">Nucleotide-binding</keyword>
<keyword id="KW-0816">Tricarboxylic acid cycle</keyword>
<dbReference type="EC" id="6.2.1.5" evidence="1"/>
<dbReference type="EMBL" id="CP001048">
    <property type="protein sequence ID" value="ACC88201.1"/>
    <property type="molecule type" value="Genomic_DNA"/>
</dbReference>
<dbReference type="RefSeq" id="WP_002210728.1">
    <property type="nucleotide sequence ID" value="NZ_CP009780.1"/>
</dbReference>
<dbReference type="SMR" id="B2K8F1"/>
<dbReference type="GeneID" id="57977251"/>
<dbReference type="KEGG" id="ypb:YPTS_1226"/>
<dbReference type="PATRIC" id="fig|502801.10.peg.575"/>
<dbReference type="UniPathway" id="UPA00223">
    <property type="reaction ID" value="UER00999"/>
</dbReference>
<dbReference type="GO" id="GO:0005829">
    <property type="term" value="C:cytosol"/>
    <property type="evidence" value="ECO:0007669"/>
    <property type="project" value="TreeGrafter"/>
</dbReference>
<dbReference type="GO" id="GO:0042709">
    <property type="term" value="C:succinate-CoA ligase complex"/>
    <property type="evidence" value="ECO:0007669"/>
    <property type="project" value="TreeGrafter"/>
</dbReference>
<dbReference type="GO" id="GO:0005524">
    <property type="term" value="F:ATP binding"/>
    <property type="evidence" value="ECO:0007669"/>
    <property type="project" value="UniProtKB-UniRule"/>
</dbReference>
<dbReference type="GO" id="GO:0000287">
    <property type="term" value="F:magnesium ion binding"/>
    <property type="evidence" value="ECO:0007669"/>
    <property type="project" value="UniProtKB-UniRule"/>
</dbReference>
<dbReference type="GO" id="GO:0004775">
    <property type="term" value="F:succinate-CoA ligase (ADP-forming) activity"/>
    <property type="evidence" value="ECO:0007669"/>
    <property type="project" value="UniProtKB-UniRule"/>
</dbReference>
<dbReference type="GO" id="GO:0004776">
    <property type="term" value="F:succinate-CoA ligase (GDP-forming) activity"/>
    <property type="evidence" value="ECO:0007669"/>
    <property type="project" value="RHEA"/>
</dbReference>
<dbReference type="GO" id="GO:0006104">
    <property type="term" value="P:succinyl-CoA metabolic process"/>
    <property type="evidence" value="ECO:0007669"/>
    <property type="project" value="TreeGrafter"/>
</dbReference>
<dbReference type="GO" id="GO:0006099">
    <property type="term" value="P:tricarboxylic acid cycle"/>
    <property type="evidence" value="ECO:0007669"/>
    <property type="project" value="UniProtKB-UniRule"/>
</dbReference>
<dbReference type="FunFam" id="3.30.1490.20:FF:000002">
    <property type="entry name" value="Succinate--CoA ligase [ADP-forming] subunit beta"/>
    <property type="match status" value="1"/>
</dbReference>
<dbReference type="FunFam" id="3.30.470.20:FF:000002">
    <property type="entry name" value="Succinate--CoA ligase [ADP-forming] subunit beta"/>
    <property type="match status" value="1"/>
</dbReference>
<dbReference type="FunFam" id="3.40.50.261:FF:000001">
    <property type="entry name" value="Succinate--CoA ligase [ADP-forming] subunit beta"/>
    <property type="match status" value="1"/>
</dbReference>
<dbReference type="Gene3D" id="3.30.1490.20">
    <property type="entry name" value="ATP-grasp fold, A domain"/>
    <property type="match status" value="1"/>
</dbReference>
<dbReference type="Gene3D" id="3.30.470.20">
    <property type="entry name" value="ATP-grasp fold, B domain"/>
    <property type="match status" value="1"/>
</dbReference>
<dbReference type="Gene3D" id="3.40.50.261">
    <property type="entry name" value="Succinyl-CoA synthetase domains"/>
    <property type="match status" value="1"/>
</dbReference>
<dbReference type="HAMAP" id="MF_00558">
    <property type="entry name" value="Succ_CoA_beta"/>
    <property type="match status" value="1"/>
</dbReference>
<dbReference type="InterPro" id="IPR011761">
    <property type="entry name" value="ATP-grasp"/>
</dbReference>
<dbReference type="InterPro" id="IPR013650">
    <property type="entry name" value="ATP-grasp_succ-CoA_synth-type"/>
</dbReference>
<dbReference type="InterPro" id="IPR013815">
    <property type="entry name" value="ATP_grasp_subdomain_1"/>
</dbReference>
<dbReference type="InterPro" id="IPR017866">
    <property type="entry name" value="Succ-CoA_synthase_bsu_CS"/>
</dbReference>
<dbReference type="InterPro" id="IPR005811">
    <property type="entry name" value="SUCC_ACL_C"/>
</dbReference>
<dbReference type="InterPro" id="IPR005809">
    <property type="entry name" value="Succ_CoA_ligase-like_bsu"/>
</dbReference>
<dbReference type="InterPro" id="IPR016102">
    <property type="entry name" value="Succinyl-CoA_synth-like"/>
</dbReference>
<dbReference type="NCBIfam" id="NF001913">
    <property type="entry name" value="PRK00696.1"/>
    <property type="match status" value="1"/>
</dbReference>
<dbReference type="NCBIfam" id="TIGR01016">
    <property type="entry name" value="sucCoAbeta"/>
    <property type="match status" value="1"/>
</dbReference>
<dbReference type="PANTHER" id="PTHR11815:SF10">
    <property type="entry name" value="SUCCINATE--COA LIGASE [GDP-FORMING] SUBUNIT BETA, MITOCHONDRIAL"/>
    <property type="match status" value="1"/>
</dbReference>
<dbReference type="PANTHER" id="PTHR11815">
    <property type="entry name" value="SUCCINYL-COA SYNTHETASE BETA CHAIN"/>
    <property type="match status" value="1"/>
</dbReference>
<dbReference type="Pfam" id="PF08442">
    <property type="entry name" value="ATP-grasp_2"/>
    <property type="match status" value="1"/>
</dbReference>
<dbReference type="Pfam" id="PF00549">
    <property type="entry name" value="Ligase_CoA"/>
    <property type="match status" value="1"/>
</dbReference>
<dbReference type="PIRSF" id="PIRSF001554">
    <property type="entry name" value="SucCS_beta"/>
    <property type="match status" value="1"/>
</dbReference>
<dbReference type="SUPFAM" id="SSF56059">
    <property type="entry name" value="Glutathione synthetase ATP-binding domain-like"/>
    <property type="match status" value="1"/>
</dbReference>
<dbReference type="SUPFAM" id="SSF52210">
    <property type="entry name" value="Succinyl-CoA synthetase domains"/>
    <property type="match status" value="1"/>
</dbReference>
<dbReference type="PROSITE" id="PS50975">
    <property type="entry name" value="ATP_GRASP"/>
    <property type="match status" value="1"/>
</dbReference>
<dbReference type="PROSITE" id="PS01217">
    <property type="entry name" value="SUCCINYL_COA_LIG_3"/>
    <property type="match status" value="1"/>
</dbReference>